<name>RCF1_LACTC</name>
<dbReference type="EMBL" id="CU928171">
    <property type="protein sequence ID" value="CAR24808.1"/>
    <property type="molecule type" value="Genomic_DNA"/>
</dbReference>
<dbReference type="RefSeq" id="XP_002555245.1">
    <property type="nucleotide sequence ID" value="XM_002555199.1"/>
</dbReference>
<dbReference type="SMR" id="C5DLZ7"/>
<dbReference type="FunCoup" id="C5DLZ7">
    <property type="interactions" value="105"/>
</dbReference>
<dbReference type="STRING" id="559295.C5DLZ7"/>
<dbReference type="GeneID" id="8293511"/>
<dbReference type="KEGG" id="lth:KLTH0G04774g"/>
<dbReference type="eggNOG" id="KOG4431">
    <property type="taxonomic scope" value="Eukaryota"/>
</dbReference>
<dbReference type="HOGENOM" id="CLU_087356_1_0_1"/>
<dbReference type="InParanoid" id="C5DLZ7"/>
<dbReference type="OMA" id="QRWIREL"/>
<dbReference type="OrthoDB" id="6604018at2759"/>
<dbReference type="Proteomes" id="UP000002036">
    <property type="component" value="Chromosome G"/>
</dbReference>
<dbReference type="GO" id="GO:0031966">
    <property type="term" value="C:mitochondrial membrane"/>
    <property type="evidence" value="ECO:0007669"/>
    <property type="project" value="UniProtKB-SubCell"/>
</dbReference>
<dbReference type="GO" id="GO:0097250">
    <property type="term" value="P:mitochondrial respirasome assembly"/>
    <property type="evidence" value="ECO:0007669"/>
    <property type="project" value="TreeGrafter"/>
</dbReference>
<dbReference type="Gene3D" id="6.10.140.1320">
    <property type="match status" value="1"/>
</dbReference>
<dbReference type="InterPro" id="IPR007667">
    <property type="entry name" value="Hypoxia_induced_domain"/>
</dbReference>
<dbReference type="InterPro" id="IPR050355">
    <property type="entry name" value="RCF1"/>
</dbReference>
<dbReference type="PANTHER" id="PTHR12297:SF3">
    <property type="entry name" value="HIG1 DOMAIN FAMILY MEMBER 1A"/>
    <property type="match status" value="1"/>
</dbReference>
<dbReference type="PANTHER" id="PTHR12297">
    <property type="entry name" value="HYPOXIA-INDUCBILE GENE 1 HIG1 -RELATED"/>
    <property type="match status" value="1"/>
</dbReference>
<dbReference type="Pfam" id="PF04588">
    <property type="entry name" value="HIG_1_N"/>
    <property type="match status" value="1"/>
</dbReference>
<dbReference type="PROSITE" id="PS51503">
    <property type="entry name" value="HIG1"/>
    <property type="match status" value="1"/>
</dbReference>
<comment type="function">
    <text evidence="1">Cytochrome c oxidase subunit which plays a role in assembly of respiratory supercomplexes.</text>
</comment>
<comment type="subunit">
    <text evidence="1">Associates with the respiratory chain complex III/complex IV supercomplex.</text>
</comment>
<comment type="subcellular location">
    <subcellularLocation>
        <location evidence="3">Mitochondrion membrane</location>
        <topology evidence="3">Multi-pass membrane protein</topology>
    </subcellularLocation>
</comment>
<comment type="similarity">
    <text evidence="5">Belongs to the RCF1 family.</text>
</comment>
<protein>
    <recommendedName>
        <fullName>Respiratory supercomplex factor 1, mitochondrial</fullName>
    </recommendedName>
</protein>
<accession>C5DLZ7</accession>
<sequence length="160" mass="18305">MSHLPSSFDGAEQDVDEMTFLEKMTFHCKQQPLVPLGTLATTVAVILAAQNVRSGNKRKAQKYFRWRVGLQGATLVALVAGSFIYGTSQKERQSKEDALREKAKLREKLWIQELERRDEETQLRKKRAELARSRAKELEQETQGLQQELRDLQAKTSSSK</sequence>
<feature type="chain" id="PRO_0000399636" description="Respiratory supercomplex factor 1, mitochondrial">
    <location>
        <begin position="1"/>
        <end position="160"/>
    </location>
</feature>
<feature type="transmembrane region" description="Helical" evidence="3">
    <location>
        <begin position="33"/>
        <end position="50"/>
    </location>
</feature>
<feature type="transmembrane region" description="Helical" evidence="3">
    <location>
        <begin position="63"/>
        <end position="85"/>
    </location>
</feature>
<feature type="domain" description="HIG1" evidence="3">
    <location>
        <begin position="5"/>
        <end position="96"/>
    </location>
</feature>
<feature type="region of interest" description="Disordered" evidence="4">
    <location>
        <begin position="135"/>
        <end position="160"/>
    </location>
</feature>
<feature type="coiled-coil region" evidence="2">
    <location>
        <begin position="86"/>
        <end position="160"/>
    </location>
</feature>
<organism>
    <name type="scientific">Lachancea thermotolerans (strain ATCC 56472 / CBS 6340 / NRRL Y-8284)</name>
    <name type="common">Yeast</name>
    <name type="synonym">Kluyveromyces thermotolerans</name>
    <dbReference type="NCBI Taxonomy" id="559295"/>
    <lineage>
        <taxon>Eukaryota</taxon>
        <taxon>Fungi</taxon>
        <taxon>Dikarya</taxon>
        <taxon>Ascomycota</taxon>
        <taxon>Saccharomycotina</taxon>
        <taxon>Saccharomycetes</taxon>
        <taxon>Saccharomycetales</taxon>
        <taxon>Saccharomycetaceae</taxon>
        <taxon>Lachancea</taxon>
    </lineage>
</organism>
<reference key="1">
    <citation type="journal article" date="2009" name="Genome Res.">
        <title>Comparative genomics of protoploid Saccharomycetaceae.</title>
        <authorList>
            <consortium name="The Genolevures Consortium"/>
            <person name="Souciet J.-L."/>
            <person name="Dujon B."/>
            <person name="Gaillardin C."/>
            <person name="Johnston M."/>
            <person name="Baret P.V."/>
            <person name="Cliften P."/>
            <person name="Sherman D.J."/>
            <person name="Weissenbach J."/>
            <person name="Westhof E."/>
            <person name="Wincker P."/>
            <person name="Jubin C."/>
            <person name="Poulain J."/>
            <person name="Barbe V."/>
            <person name="Segurens B."/>
            <person name="Artiguenave F."/>
            <person name="Anthouard V."/>
            <person name="Vacherie B."/>
            <person name="Val M.-E."/>
            <person name="Fulton R.S."/>
            <person name="Minx P."/>
            <person name="Wilson R."/>
            <person name="Durrens P."/>
            <person name="Jean G."/>
            <person name="Marck C."/>
            <person name="Martin T."/>
            <person name="Nikolski M."/>
            <person name="Rolland T."/>
            <person name="Seret M.-L."/>
            <person name="Casaregola S."/>
            <person name="Despons L."/>
            <person name="Fairhead C."/>
            <person name="Fischer G."/>
            <person name="Lafontaine I."/>
            <person name="Leh V."/>
            <person name="Lemaire M."/>
            <person name="de Montigny J."/>
            <person name="Neuveglise C."/>
            <person name="Thierry A."/>
            <person name="Blanc-Lenfle I."/>
            <person name="Bleykasten C."/>
            <person name="Diffels J."/>
            <person name="Fritsch E."/>
            <person name="Frangeul L."/>
            <person name="Goeffon A."/>
            <person name="Jauniaux N."/>
            <person name="Kachouri-Lafond R."/>
            <person name="Payen C."/>
            <person name="Potier S."/>
            <person name="Pribylova L."/>
            <person name="Ozanne C."/>
            <person name="Richard G.-F."/>
            <person name="Sacerdot C."/>
            <person name="Straub M.-L."/>
            <person name="Talla E."/>
        </authorList>
    </citation>
    <scope>NUCLEOTIDE SEQUENCE [LARGE SCALE GENOMIC DNA]</scope>
    <source>
        <strain>ATCC 56472 / CBS 6340 / NRRL Y-8284</strain>
    </source>
</reference>
<evidence type="ECO:0000250" key="1"/>
<evidence type="ECO:0000255" key="2"/>
<evidence type="ECO:0000255" key="3">
    <source>
        <dbReference type="PROSITE-ProRule" id="PRU00836"/>
    </source>
</evidence>
<evidence type="ECO:0000256" key="4">
    <source>
        <dbReference type="SAM" id="MobiDB-lite"/>
    </source>
</evidence>
<evidence type="ECO:0000305" key="5"/>
<proteinExistence type="inferred from homology"/>
<gene>
    <name type="primary">RCF1</name>
    <name type="synonym">AIM31</name>
    <name type="ordered locus">KLTH0G04774g</name>
</gene>
<keyword id="KW-0175">Coiled coil</keyword>
<keyword id="KW-0472">Membrane</keyword>
<keyword id="KW-0496">Mitochondrion</keyword>
<keyword id="KW-1185">Reference proteome</keyword>
<keyword id="KW-0812">Transmembrane</keyword>
<keyword id="KW-1133">Transmembrane helix</keyword>